<organism>
    <name type="scientific">Prochlorococcus marinus (strain NATL2A)</name>
    <dbReference type="NCBI Taxonomy" id="59920"/>
    <lineage>
        <taxon>Bacteria</taxon>
        <taxon>Bacillati</taxon>
        <taxon>Cyanobacteriota</taxon>
        <taxon>Cyanophyceae</taxon>
        <taxon>Synechococcales</taxon>
        <taxon>Prochlorococcaceae</taxon>
        <taxon>Prochlorococcus</taxon>
    </lineage>
</organism>
<comment type="function">
    <text evidence="1">Catalyzes the two-electron reduction of the C2 and C3(1) diene system of 15,16-dihydrobiliverdin.</text>
</comment>
<comment type="catalytic activity">
    <reaction evidence="1">
        <text>(3Z)-phycoerythrobilin + oxidized 2[4Fe-4S]-[ferredoxin] = 15,16-dihydrobiliverdin + reduced 2[4Fe-4S]-[ferredoxin] + 2 H(+)</text>
        <dbReference type="Rhea" id="RHEA:22092"/>
        <dbReference type="Rhea" id="RHEA-COMP:10002"/>
        <dbReference type="Rhea" id="RHEA-COMP:10004"/>
        <dbReference type="ChEBI" id="CHEBI:15378"/>
        <dbReference type="ChEBI" id="CHEBI:33722"/>
        <dbReference type="ChEBI" id="CHEBI:33723"/>
        <dbReference type="ChEBI" id="CHEBI:57438"/>
        <dbReference type="ChEBI" id="CHEBI:57899"/>
        <dbReference type="EC" id="1.3.7.3"/>
    </reaction>
</comment>
<comment type="similarity">
    <text evidence="1">Belongs to the HY2 family.</text>
</comment>
<name>PEBB_PROMT</name>
<proteinExistence type="inferred from homology"/>
<feature type="chain" id="PRO_1000046929" description="Phycoerythrobilin:ferredoxin oxidoreductase">
    <location>
        <begin position="1"/>
        <end position="258"/>
    </location>
</feature>
<protein>
    <recommendedName>
        <fullName evidence="1">Phycoerythrobilin:ferredoxin oxidoreductase</fullName>
        <ecNumber evidence="1">1.3.7.3</ecNumber>
    </recommendedName>
</protein>
<reference key="1">
    <citation type="journal article" date="2007" name="PLoS Genet.">
        <title>Patterns and implications of gene gain and loss in the evolution of Prochlorococcus.</title>
        <authorList>
            <person name="Kettler G.C."/>
            <person name="Martiny A.C."/>
            <person name="Huang K."/>
            <person name="Zucker J."/>
            <person name="Coleman M.L."/>
            <person name="Rodrigue S."/>
            <person name="Chen F."/>
            <person name="Lapidus A."/>
            <person name="Ferriera S."/>
            <person name="Johnson J."/>
            <person name="Steglich C."/>
            <person name="Church G.M."/>
            <person name="Richardson P."/>
            <person name="Chisholm S.W."/>
        </authorList>
    </citation>
    <scope>NUCLEOTIDE SEQUENCE [LARGE SCALE GENOMIC DNA]</scope>
    <source>
        <strain>NATL2A</strain>
    </source>
</reference>
<gene>
    <name evidence="1" type="primary">pebB</name>
    <name type="ordered locus">PMN2A_1167</name>
</gene>
<accession>Q46IM1</accession>
<sequence length="258" mass="29926">MQIIRNNSQDPISISNWRWACFLDETIKAFSTFQTRPYQIDNDFLFRESFFGSSSNPKKVILETWGLKMEKIRQARCACLQAGEITSVMNLVISPLNNYDLPFFGADFVTLPNGHLIALDLQPALKDDINHTQHVWNKLKPIHAHWQSKIPSGGDIPSDARQYFSPAFLWSRIPLGEEGDNLITQTIKPAFDEYLNCFFDLLRDAKITSKERSFQLLNGQKKYMRYRAEKDPARGMLRSFFGEVWTESYINNILFDLK</sequence>
<evidence type="ECO:0000255" key="1">
    <source>
        <dbReference type="HAMAP-Rule" id="MF_00793"/>
    </source>
</evidence>
<dbReference type="EC" id="1.3.7.3" evidence="1"/>
<dbReference type="EMBL" id="CP000095">
    <property type="protein sequence ID" value="AAZ58657.1"/>
    <property type="molecule type" value="Genomic_DNA"/>
</dbReference>
<dbReference type="RefSeq" id="WP_011295511.1">
    <property type="nucleotide sequence ID" value="NC_007335.2"/>
</dbReference>
<dbReference type="SMR" id="Q46IM1"/>
<dbReference type="STRING" id="59920.PMN2A_1167"/>
<dbReference type="KEGG" id="pmn:PMN2A_1167"/>
<dbReference type="HOGENOM" id="CLU_086208_1_0_3"/>
<dbReference type="OrthoDB" id="421401at2"/>
<dbReference type="PhylomeDB" id="Q46IM1"/>
<dbReference type="Proteomes" id="UP000002535">
    <property type="component" value="Chromosome"/>
</dbReference>
<dbReference type="GO" id="GO:0050897">
    <property type="term" value="F:cobalt ion binding"/>
    <property type="evidence" value="ECO:0007669"/>
    <property type="project" value="InterPro"/>
</dbReference>
<dbReference type="GO" id="GO:0050618">
    <property type="term" value="F:phycoerythrobilin:ferredoxin oxidoreductase activity"/>
    <property type="evidence" value="ECO:0007669"/>
    <property type="project" value="UniProtKB-UniRule"/>
</dbReference>
<dbReference type="GO" id="GO:0010024">
    <property type="term" value="P:phytochromobilin biosynthetic process"/>
    <property type="evidence" value="ECO:0007669"/>
    <property type="project" value="InterPro"/>
</dbReference>
<dbReference type="Gene3D" id="3.40.1500.20">
    <property type="match status" value="1"/>
</dbReference>
<dbReference type="HAMAP" id="MF_00793">
    <property type="entry name" value="PebB"/>
    <property type="match status" value="1"/>
</dbReference>
<dbReference type="InterPro" id="IPR009249">
    <property type="entry name" value="Ferredoxin-dep_bilin_Rdtase"/>
</dbReference>
<dbReference type="InterPro" id="IPR022827">
    <property type="entry name" value="Phycoerythrobilin_Fdx_Rdtase"/>
</dbReference>
<dbReference type="NCBIfam" id="NF009722">
    <property type="entry name" value="PRK13249.1"/>
    <property type="match status" value="1"/>
</dbReference>
<dbReference type="PANTHER" id="PTHR34557">
    <property type="entry name" value="PHYTOCHROMOBILIN:FERREDOXIN OXIDOREDUCTASE, CHLOROPLASTIC"/>
    <property type="match status" value="1"/>
</dbReference>
<dbReference type="PANTHER" id="PTHR34557:SF1">
    <property type="entry name" value="PHYTOCHROMOBILIN:FERREDOXIN OXIDOREDUCTASE, CHLOROPLASTIC"/>
    <property type="match status" value="1"/>
</dbReference>
<dbReference type="Pfam" id="PF05996">
    <property type="entry name" value="Fe_bilin_red"/>
    <property type="match status" value="1"/>
</dbReference>
<keyword id="KW-0560">Oxidoreductase</keyword>
<keyword id="KW-1185">Reference proteome</keyword>